<evidence type="ECO:0000255" key="1">
    <source>
        <dbReference type="HAMAP-Rule" id="MF_00487"/>
    </source>
</evidence>
<accession>Q3A5S0</accession>
<feature type="chain" id="PRO_0000241958" description="Malate dehydrogenase">
    <location>
        <begin position="1"/>
        <end position="318"/>
    </location>
</feature>
<feature type="active site" description="Proton acceptor" evidence="1">
    <location>
        <position position="176"/>
    </location>
</feature>
<feature type="binding site" evidence="1">
    <location>
        <begin position="10"/>
        <end position="15"/>
    </location>
    <ligand>
        <name>NAD(+)</name>
        <dbReference type="ChEBI" id="CHEBI:57540"/>
    </ligand>
</feature>
<feature type="binding site" evidence="1">
    <location>
        <position position="34"/>
    </location>
    <ligand>
        <name>NAD(+)</name>
        <dbReference type="ChEBI" id="CHEBI:57540"/>
    </ligand>
</feature>
<feature type="binding site" evidence="1">
    <location>
        <position position="83"/>
    </location>
    <ligand>
        <name>substrate</name>
    </ligand>
</feature>
<feature type="binding site" evidence="1">
    <location>
        <position position="89"/>
    </location>
    <ligand>
        <name>substrate</name>
    </ligand>
</feature>
<feature type="binding site" evidence="1">
    <location>
        <position position="96"/>
    </location>
    <ligand>
        <name>NAD(+)</name>
        <dbReference type="ChEBI" id="CHEBI:57540"/>
    </ligand>
</feature>
<feature type="binding site" evidence="1">
    <location>
        <begin position="119"/>
        <end position="121"/>
    </location>
    <ligand>
        <name>NAD(+)</name>
        <dbReference type="ChEBI" id="CHEBI:57540"/>
    </ligand>
</feature>
<feature type="binding site" evidence="1">
    <location>
        <position position="121"/>
    </location>
    <ligand>
        <name>substrate</name>
    </ligand>
</feature>
<feature type="binding site" evidence="1">
    <location>
        <position position="152"/>
    </location>
    <ligand>
        <name>substrate</name>
    </ligand>
</feature>
<protein>
    <recommendedName>
        <fullName evidence="1">Malate dehydrogenase</fullName>
        <ecNumber evidence="1">1.1.1.37</ecNumber>
    </recommendedName>
</protein>
<name>MDH_SYNC1</name>
<sequence length="318" mass="33609">MVKPKIALIGGGQIGNSIAHLAAMRELGNVIMFDIKDGLAQGKCLDIAQAAPISNFDVQLCGSNDISCIAGADIVVVTAGIPRKPGMTREDLIEINARIMVTVAEGIKTHAPESIVIVLSNPLDAMVTLCQKITGFPTQRIMGMAGVLDSARFASFIAWELGVSVRDVNAMVLGGHGDAMVPIVRFANVNGIPALELLKNKYGDEDKARQVMAGLVERTQDAGGEVVHLLQTGSAFISPATSAIAMVEAVIHDQKRLLPVCAMLDGQFGISGYYVGVPCILGVGGVERIVEFELTEDEQALLDHSVGEVKKLVDSLPL</sequence>
<keyword id="KW-0520">NAD</keyword>
<keyword id="KW-0560">Oxidoreductase</keyword>
<keyword id="KW-1185">Reference proteome</keyword>
<keyword id="KW-0816">Tricarboxylic acid cycle</keyword>
<gene>
    <name evidence="1" type="primary">mdh</name>
    <name type="ordered locus">Pcar_1037</name>
</gene>
<dbReference type="EC" id="1.1.1.37" evidence="1"/>
<dbReference type="EMBL" id="CP000142">
    <property type="protein sequence ID" value="ABA88287.1"/>
    <property type="molecule type" value="Genomic_DNA"/>
</dbReference>
<dbReference type="RefSeq" id="WP_011340755.1">
    <property type="nucleotide sequence ID" value="NC_007498.2"/>
</dbReference>
<dbReference type="SMR" id="Q3A5S0"/>
<dbReference type="STRING" id="338963.Pcar_1037"/>
<dbReference type="KEGG" id="pca:Pcar_1037"/>
<dbReference type="eggNOG" id="COG0039">
    <property type="taxonomic scope" value="Bacteria"/>
</dbReference>
<dbReference type="HOGENOM" id="CLU_045401_2_1_7"/>
<dbReference type="OrthoDB" id="9802969at2"/>
<dbReference type="Proteomes" id="UP000002534">
    <property type="component" value="Chromosome"/>
</dbReference>
<dbReference type="GO" id="GO:0004459">
    <property type="term" value="F:L-lactate dehydrogenase activity"/>
    <property type="evidence" value="ECO:0007669"/>
    <property type="project" value="TreeGrafter"/>
</dbReference>
<dbReference type="GO" id="GO:0030060">
    <property type="term" value="F:L-malate dehydrogenase (NAD+) activity"/>
    <property type="evidence" value="ECO:0007669"/>
    <property type="project" value="UniProtKB-UniRule"/>
</dbReference>
<dbReference type="GO" id="GO:0006089">
    <property type="term" value="P:lactate metabolic process"/>
    <property type="evidence" value="ECO:0007669"/>
    <property type="project" value="TreeGrafter"/>
</dbReference>
<dbReference type="GO" id="GO:0006099">
    <property type="term" value="P:tricarboxylic acid cycle"/>
    <property type="evidence" value="ECO:0007669"/>
    <property type="project" value="UniProtKB-UniRule"/>
</dbReference>
<dbReference type="CDD" id="cd01339">
    <property type="entry name" value="LDH-like_MDH"/>
    <property type="match status" value="1"/>
</dbReference>
<dbReference type="FunFam" id="3.40.50.720:FF:000018">
    <property type="entry name" value="Malate dehydrogenase"/>
    <property type="match status" value="1"/>
</dbReference>
<dbReference type="FunFam" id="3.90.110.10:FF:000004">
    <property type="entry name" value="Malate dehydrogenase"/>
    <property type="match status" value="1"/>
</dbReference>
<dbReference type="Gene3D" id="3.90.110.10">
    <property type="entry name" value="Lactate dehydrogenase/glycoside hydrolase, family 4, C-terminal"/>
    <property type="match status" value="1"/>
</dbReference>
<dbReference type="Gene3D" id="3.40.50.720">
    <property type="entry name" value="NAD(P)-binding Rossmann-like Domain"/>
    <property type="match status" value="1"/>
</dbReference>
<dbReference type="HAMAP" id="MF_00487">
    <property type="entry name" value="Malate_dehydrog_3"/>
    <property type="match status" value="1"/>
</dbReference>
<dbReference type="InterPro" id="IPR001557">
    <property type="entry name" value="L-lactate/malate_DH"/>
</dbReference>
<dbReference type="InterPro" id="IPR022383">
    <property type="entry name" value="Lactate/malate_DH_C"/>
</dbReference>
<dbReference type="InterPro" id="IPR001236">
    <property type="entry name" value="Lactate/malate_DH_N"/>
</dbReference>
<dbReference type="InterPro" id="IPR015955">
    <property type="entry name" value="Lactate_DH/Glyco_Ohase_4_C"/>
</dbReference>
<dbReference type="InterPro" id="IPR011275">
    <property type="entry name" value="Malate_DH_type3"/>
</dbReference>
<dbReference type="InterPro" id="IPR036291">
    <property type="entry name" value="NAD(P)-bd_dom_sf"/>
</dbReference>
<dbReference type="NCBIfam" id="TIGR01763">
    <property type="entry name" value="MalateDH_bact"/>
    <property type="match status" value="1"/>
</dbReference>
<dbReference type="NCBIfam" id="NF004863">
    <property type="entry name" value="PRK06223.1"/>
    <property type="match status" value="1"/>
</dbReference>
<dbReference type="PANTHER" id="PTHR43128">
    <property type="entry name" value="L-2-HYDROXYCARBOXYLATE DEHYDROGENASE (NAD(P)(+))"/>
    <property type="match status" value="1"/>
</dbReference>
<dbReference type="PANTHER" id="PTHR43128:SF16">
    <property type="entry name" value="L-LACTATE DEHYDROGENASE"/>
    <property type="match status" value="1"/>
</dbReference>
<dbReference type="Pfam" id="PF02866">
    <property type="entry name" value="Ldh_1_C"/>
    <property type="match status" value="1"/>
</dbReference>
<dbReference type="Pfam" id="PF00056">
    <property type="entry name" value="Ldh_1_N"/>
    <property type="match status" value="1"/>
</dbReference>
<dbReference type="PIRSF" id="PIRSF000102">
    <property type="entry name" value="Lac_mal_DH"/>
    <property type="match status" value="1"/>
</dbReference>
<dbReference type="PRINTS" id="PR00086">
    <property type="entry name" value="LLDHDRGNASE"/>
</dbReference>
<dbReference type="SUPFAM" id="SSF56327">
    <property type="entry name" value="LDH C-terminal domain-like"/>
    <property type="match status" value="1"/>
</dbReference>
<dbReference type="SUPFAM" id="SSF51735">
    <property type="entry name" value="NAD(P)-binding Rossmann-fold domains"/>
    <property type="match status" value="1"/>
</dbReference>
<organism>
    <name type="scientific">Syntrophotalea carbinolica (strain DSM 2380 / NBRC 103641 / GraBd1)</name>
    <name type="common">Pelobacter carbinolicus</name>
    <dbReference type="NCBI Taxonomy" id="338963"/>
    <lineage>
        <taxon>Bacteria</taxon>
        <taxon>Pseudomonadati</taxon>
        <taxon>Thermodesulfobacteriota</taxon>
        <taxon>Desulfuromonadia</taxon>
        <taxon>Desulfuromonadales</taxon>
        <taxon>Syntrophotaleaceae</taxon>
        <taxon>Syntrophotalea</taxon>
    </lineage>
</organism>
<proteinExistence type="inferred from homology"/>
<comment type="function">
    <text evidence="1">Catalyzes the reversible oxidation of malate to oxaloacetate.</text>
</comment>
<comment type="catalytic activity">
    <reaction evidence="1">
        <text>(S)-malate + NAD(+) = oxaloacetate + NADH + H(+)</text>
        <dbReference type="Rhea" id="RHEA:21432"/>
        <dbReference type="ChEBI" id="CHEBI:15378"/>
        <dbReference type="ChEBI" id="CHEBI:15589"/>
        <dbReference type="ChEBI" id="CHEBI:16452"/>
        <dbReference type="ChEBI" id="CHEBI:57540"/>
        <dbReference type="ChEBI" id="CHEBI:57945"/>
        <dbReference type="EC" id="1.1.1.37"/>
    </reaction>
</comment>
<comment type="similarity">
    <text evidence="1">Belongs to the LDH/MDH superfamily. MDH type 3 family.</text>
</comment>
<reference key="1">
    <citation type="submission" date="2005-10" db="EMBL/GenBank/DDBJ databases">
        <title>Complete sequence of Pelobacter carbinolicus DSM 2380.</title>
        <authorList>
            <person name="Copeland A."/>
            <person name="Lucas S."/>
            <person name="Lapidus A."/>
            <person name="Barry K."/>
            <person name="Detter J.C."/>
            <person name="Glavina T."/>
            <person name="Hammon N."/>
            <person name="Israni S."/>
            <person name="Pitluck S."/>
            <person name="Chertkov O."/>
            <person name="Schmutz J."/>
            <person name="Larimer F."/>
            <person name="Land M."/>
            <person name="Kyrpides N."/>
            <person name="Ivanova N."/>
            <person name="Richardson P."/>
        </authorList>
    </citation>
    <scope>NUCLEOTIDE SEQUENCE [LARGE SCALE GENOMIC DNA]</scope>
    <source>
        <strain>DSM 2380 / NBRC 103641 / GraBd1</strain>
    </source>
</reference>